<proteinExistence type="inferred from homology"/>
<organism>
    <name type="scientific">Dictyostelium discoideum</name>
    <name type="common">Social amoeba</name>
    <dbReference type="NCBI Taxonomy" id="44689"/>
    <lineage>
        <taxon>Eukaryota</taxon>
        <taxon>Amoebozoa</taxon>
        <taxon>Evosea</taxon>
        <taxon>Eumycetozoa</taxon>
        <taxon>Dictyostelia</taxon>
        <taxon>Dictyosteliales</taxon>
        <taxon>Dictyosteliaceae</taxon>
        <taxon>Dictyostelium</taxon>
    </lineage>
</organism>
<dbReference type="EMBL" id="AAFI02000055">
    <property type="protein sequence ID" value="EAL65724.1"/>
    <property type="molecule type" value="Genomic_DNA"/>
</dbReference>
<dbReference type="RefSeq" id="XP_639102.1">
    <property type="nucleotide sequence ID" value="XM_634010.1"/>
</dbReference>
<dbReference type="STRING" id="44689.Q54QY9"/>
<dbReference type="PaxDb" id="44689-DDB0220442"/>
<dbReference type="EnsemblProtists" id="EAL65724">
    <property type="protein sequence ID" value="EAL65724"/>
    <property type="gene ID" value="DDB_G0283479"/>
</dbReference>
<dbReference type="GeneID" id="8624126"/>
<dbReference type="KEGG" id="ddi:DDB_G0283479"/>
<dbReference type="dictyBase" id="DDB_G0283479">
    <property type="gene designation" value="abcH4"/>
</dbReference>
<dbReference type="VEuPathDB" id="AmoebaDB:DDB_G0283479"/>
<dbReference type="eggNOG" id="KOG0055">
    <property type="taxonomic scope" value="Eukaryota"/>
</dbReference>
<dbReference type="HOGENOM" id="CLU_326652_0_0_1"/>
<dbReference type="InParanoid" id="Q54QY9"/>
<dbReference type="OMA" id="WRSIHNR"/>
<dbReference type="PRO" id="PR:Q54QY9"/>
<dbReference type="Proteomes" id="UP000002195">
    <property type="component" value="Chromosome 4"/>
</dbReference>
<dbReference type="GO" id="GO:0016020">
    <property type="term" value="C:membrane"/>
    <property type="evidence" value="ECO:0000318"/>
    <property type="project" value="GO_Central"/>
</dbReference>
<dbReference type="GO" id="GO:0005524">
    <property type="term" value="F:ATP binding"/>
    <property type="evidence" value="ECO:0007669"/>
    <property type="project" value="UniProtKB-KW"/>
</dbReference>
<dbReference type="GO" id="GO:0016887">
    <property type="term" value="F:ATP hydrolysis activity"/>
    <property type="evidence" value="ECO:0007669"/>
    <property type="project" value="InterPro"/>
</dbReference>
<dbReference type="GO" id="GO:0042626">
    <property type="term" value="F:ATPase-coupled transmembrane transporter activity"/>
    <property type="evidence" value="ECO:0000318"/>
    <property type="project" value="GO_Central"/>
</dbReference>
<dbReference type="GO" id="GO:0055085">
    <property type="term" value="P:transmembrane transport"/>
    <property type="evidence" value="ECO:0000318"/>
    <property type="project" value="GO_Central"/>
</dbReference>
<dbReference type="FunFam" id="1.20.1560.10:FF:000573">
    <property type="entry name" value="ABC transporter H family member 4"/>
    <property type="match status" value="1"/>
</dbReference>
<dbReference type="FunFam" id="3.40.50.300:FF:005968">
    <property type="entry name" value="ABC transporter H family member 4"/>
    <property type="match status" value="1"/>
</dbReference>
<dbReference type="FunFam" id="3.40.50.300:FF:006017">
    <property type="entry name" value="ABC transporter H family member 4"/>
    <property type="match status" value="1"/>
</dbReference>
<dbReference type="Gene3D" id="1.20.1560.10">
    <property type="entry name" value="ABC transporter type 1, transmembrane domain"/>
    <property type="match status" value="1"/>
</dbReference>
<dbReference type="Gene3D" id="3.40.50.300">
    <property type="entry name" value="P-loop containing nucleotide triphosphate hydrolases"/>
    <property type="match status" value="2"/>
</dbReference>
<dbReference type="InterPro" id="IPR003593">
    <property type="entry name" value="AAA+_ATPase"/>
</dbReference>
<dbReference type="InterPro" id="IPR036640">
    <property type="entry name" value="ABC1_TM_sf"/>
</dbReference>
<dbReference type="InterPro" id="IPR003439">
    <property type="entry name" value="ABC_transporter-like_ATP-bd"/>
</dbReference>
<dbReference type="InterPro" id="IPR027417">
    <property type="entry name" value="P-loop_NTPase"/>
</dbReference>
<dbReference type="InterPro" id="IPR039421">
    <property type="entry name" value="Type_1_exporter"/>
</dbReference>
<dbReference type="PANTHER" id="PTHR24221:SF281">
    <property type="entry name" value="ABC TRANSPORTER H FAMILY MEMBER 4"/>
    <property type="match status" value="1"/>
</dbReference>
<dbReference type="PANTHER" id="PTHR24221">
    <property type="entry name" value="ATP-BINDING CASSETTE SUB-FAMILY B"/>
    <property type="match status" value="1"/>
</dbReference>
<dbReference type="Pfam" id="PF00005">
    <property type="entry name" value="ABC_tran"/>
    <property type="match status" value="1"/>
</dbReference>
<dbReference type="SMART" id="SM00382">
    <property type="entry name" value="AAA"/>
    <property type="match status" value="1"/>
</dbReference>
<dbReference type="SUPFAM" id="SSF90123">
    <property type="entry name" value="ABC transporter transmembrane region"/>
    <property type="match status" value="1"/>
</dbReference>
<dbReference type="SUPFAM" id="SSF52540">
    <property type="entry name" value="P-loop containing nucleoside triphosphate hydrolases"/>
    <property type="match status" value="1"/>
</dbReference>
<dbReference type="PROSITE" id="PS50893">
    <property type="entry name" value="ABC_TRANSPORTER_2"/>
    <property type="match status" value="1"/>
</dbReference>
<accession>Q54QY9</accession>
<comment type="subcellular location">
    <subcellularLocation>
        <location evidence="4">Membrane</location>
        <topology evidence="4">Multi-pass membrane protein</topology>
    </subcellularLocation>
</comment>
<comment type="similarity">
    <text evidence="4">Belongs to the ABC transporter superfamily. ABCH family.</text>
</comment>
<evidence type="ECO:0000255" key="1"/>
<evidence type="ECO:0000255" key="2">
    <source>
        <dbReference type="PROSITE-ProRule" id="PRU00434"/>
    </source>
</evidence>
<evidence type="ECO:0000256" key="3">
    <source>
        <dbReference type="SAM" id="MobiDB-lite"/>
    </source>
</evidence>
<evidence type="ECO:0000305" key="4"/>
<reference key="1">
    <citation type="journal article" date="2005" name="Nature">
        <title>The genome of the social amoeba Dictyostelium discoideum.</title>
        <authorList>
            <person name="Eichinger L."/>
            <person name="Pachebat J.A."/>
            <person name="Gloeckner G."/>
            <person name="Rajandream M.A."/>
            <person name="Sucgang R."/>
            <person name="Berriman M."/>
            <person name="Song J."/>
            <person name="Olsen R."/>
            <person name="Szafranski K."/>
            <person name="Xu Q."/>
            <person name="Tunggal B."/>
            <person name="Kummerfeld S."/>
            <person name="Madera M."/>
            <person name="Konfortov B.A."/>
            <person name="Rivero F."/>
            <person name="Bankier A.T."/>
            <person name="Lehmann R."/>
            <person name="Hamlin N."/>
            <person name="Davies R."/>
            <person name="Gaudet P."/>
            <person name="Fey P."/>
            <person name="Pilcher K."/>
            <person name="Chen G."/>
            <person name="Saunders D."/>
            <person name="Sodergren E.J."/>
            <person name="Davis P."/>
            <person name="Kerhornou A."/>
            <person name="Nie X."/>
            <person name="Hall N."/>
            <person name="Anjard C."/>
            <person name="Hemphill L."/>
            <person name="Bason N."/>
            <person name="Farbrother P."/>
            <person name="Desany B."/>
            <person name="Just E."/>
            <person name="Morio T."/>
            <person name="Rost R."/>
            <person name="Churcher C.M."/>
            <person name="Cooper J."/>
            <person name="Haydock S."/>
            <person name="van Driessche N."/>
            <person name="Cronin A."/>
            <person name="Goodhead I."/>
            <person name="Muzny D.M."/>
            <person name="Mourier T."/>
            <person name="Pain A."/>
            <person name="Lu M."/>
            <person name="Harper D."/>
            <person name="Lindsay R."/>
            <person name="Hauser H."/>
            <person name="James K.D."/>
            <person name="Quiles M."/>
            <person name="Madan Babu M."/>
            <person name="Saito T."/>
            <person name="Buchrieser C."/>
            <person name="Wardroper A."/>
            <person name="Felder M."/>
            <person name="Thangavelu M."/>
            <person name="Johnson D."/>
            <person name="Knights A."/>
            <person name="Loulseged H."/>
            <person name="Mungall K.L."/>
            <person name="Oliver K."/>
            <person name="Price C."/>
            <person name="Quail M.A."/>
            <person name="Urushihara H."/>
            <person name="Hernandez J."/>
            <person name="Rabbinowitsch E."/>
            <person name="Steffen D."/>
            <person name="Sanders M."/>
            <person name="Ma J."/>
            <person name="Kohara Y."/>
            <person name="Sharp S."/>
            <person name="Simmonds M.N."/>
            <person name="Spiegler S."/>
            <person name="Tivey A."/>
            <person name="Sugano S."/>
            <person name="White B."/>
            <person name="Walker D."/>
            <person name="Woodward J.R."/>
            <person name="Winckler T."/>
            <person name="Tanaka Y."/>
            <person name="Shaulsky G."/>
            <person name="Schleicher M."/>
            <person name="Weinstock G.M."/>
            <person name="Rosenthal A."/>
            <person name="Cox E.C."/>
            <person name="Chisholm R.L."/>
            <person name="Gibbs R.A."/>
            <person name="Loomis W.F."/>
            <person name="Platzer M."/>
            <person name="Kay R.R."/>
            <person name="Williams J.G."/>
            <person name="Dear P.H."/>
            <person name="Noegel A.A."/>
            <person name="Barrell B.G."/>
            <person name="Kuspa A."/>
        </authorList>
    </citation>
    <scope>NUCLEOTIDE SEQUENCE [LARGE SCALE GENOMIC DNA]</scope>
    <source>
        <strain>AX4</strain>
    </source>
</reference>
<protein>
    <recommendedName>
        <fullName>ABC transporter H family member 4</fullName>
    </recommendedName>
    <alternativeName>
        <fullName>ABC transporter ABCH.4</fullName>
    </alternativeName>
</protein>
<feature type="chain" id="PRO_0000391606" description="ABC transporter H family member 4">
    <location>
        <begin position="1"/>
        <end position="882"/>
    </location>
</feature>
<feature type="transmembrane region" description="Helical" evidence="1">
    <location>
        <begin position="4"/>
        <end position="24"/>
    </location>
</feature>
<feature type="transmembrane region" description="Helical" evidence="1">
    <location>
        <begin position="35"/>
        <end position="55"/>
    </location>
</feature>
<feature type="transmembrane region" description="Helical" evidence="1">
    <location>
        <begin position="79"/>
        <end position="101"/>
    </location>
</feature>
<feature type="domain" description="ABC transporter" evidence="2">
    <location>
        <begin position="384"/>
        <end position="863"/>
    </location>
</feature>
<feature type="region of interest" description="Disordered" evidence="3">
    <location>
        <begin position="522"/>
        <end position="617"/>
    </location>
</feature>
<feature type="region of interest" description="Disordered" evidence="3">
    <location>
        <begin position="634"/>
        <end position="669"/>
    </location>
</feature>
<feature type="region of interest" description="Disordered" evidence="3">
    <location>
        <begin position="710"/>
        <end position="730"/>
    </location>
</feature>
<feature type="compositionally biased region" description="Low complexity" evidence="3">
    <location>
        <begin position="528"/>
        <end position="617"/>
    </location>
</feature>
<feature type="compositionally biased region" description="Low complexity" evidence="3">
    <location>
        <begin position="647"/>
        <end position="667"/>
    </location>
</feature>
<feature type="compositionally biased region" description="Acidic residues" evidence="3">
    <location>
        <begin position="715"/>
        <end position="724"/>
    </location>
</feature>
<feature type="binding site" evidence="2">
    <location>
        <begin position="418"/>
        <end position="425"/>
    </location>
    <ligand>
        <name>ATP</name>
        <dbReference type="ChEBI" id="CHEBI:30616"/>
    </ligand>
</feature>
<sequence length="882" mass="100176">MKNWIKLKLTAIGWFIYGMPISVFYRYLWLRNKTLLFKTIAVHYIIPLIIELLPWYASKRKIGNYLRTSRVEITHTMSTNGPYSHSAVIKYVLLTIYYAILDNINSHLISIVSLENRLQIRRLVMEKLLYSEIGAFDFLRKKKNIGPAELEYKLSSSINTTISFFTYTIPDLIASIYAFVIEGSELLKKGHKIDPLIVLHPILIAIYQKVSQKLRERLVENNPDSSKFKDPYNSAMSKMISNTAEGLSDIQINNLQETQLGLFDNLIEKELSNTQSFSTLISRTWRSIHNRSLFEFAAEVWVAHKVMDRQKIDNQLYRTTLLDINRVIRLGNRLFQSLGSFKNIYKHQKKVKKLLNIPTFIEEDSHLKYIYKFEELKVSSDLKFSYENKFSSELPSFPVLDLQNEMVILPNKRYALIGQNRSGKSTLNHLLCKLYTPTEGQISMNGIPYSEISRSSIRRMISYVSQRPFIFPGTIMDNIRVGNPSATEEQVLEAADAAGVFAFADDNNFSLKQSFDSLSDTFDPDMEIPPTISPLSTSSNNINNTTTTTTNNNNNNNNNNNNNNNNNNNNNNNNNNNNNNNNNNNNNNNNNKNNNNNNNKPTTPTFVPSSPSQYSTINKSTIINNNTFIRRNSSMSQLNNSGGGNVNGNNNNNNNNNNNNNININNSGVGGRRNSVMDLQNKLLNQCDESESNKLVKRVWSVLNLTSISNSGGGDESDDDDEEAERNQRSLTPIIVPQLIDGGLSNHPILNQVVEAGGKNISGGFAQSIALARIFVRTEAKIVILDESMSQMDAFKKREIIFPKLFGFAEKHNITLIIVTHDLASVQNTVDHIFVLDHGKLCHQGSHEELMNENAQVYYKLLGLRKRFKNQSFNNLNTNTNK</sequence>
<gene>
    <name type="primary">abcH4</name>
    <name type="ORF">DDB_G0283479</name>
</gene>
<keyword id="KW-0067">ATP-binding</keyword>
<keyword id="KW-0472">Membrane</keyword>
<keyword id="KW-0547">Nucleotide-binding</keyword>
<keyword id="KW-1185">Reference proteome</keyword>
<keyword id="KW-0812">Transmembrane</keyword>
<keyword id="KW-1133">Transmembrane helix</keyword>
<keyword id="KW-0813">Transport</keyword>
<name>ABCH4_DICDI</name>